<dbReference type="EC" id="6.3.3.1" evidence="1"/>
<dbReference type="EMBL" id="CP000507">
    <property type="protein sequence ID" value="ABM00303.1"/>
    <property type="molecule type" value="Genomic_DNA"/>
</dbReference>
<dbReference type="RefSeq" id="WP_011760210.1">
    <property type="nucleotide sequence ID" value="NC_008700.1"/>
</dbReference>
<dbReference type="SMR" id="A1S7E6"/>
<dbReference type="STRING" id="326297.Sama_2097"/>
<dbReference type="KEGG" id="saz:Sama_2097"/>
<dbReference type="eggNOG" id="COG0150">
    <property type="taxonomic scope" value="Bacteria"/>
</dbReference>
<dbReference type="HOGENOM" id="CLU_047116_0_0_6"/>
<dbReference type="OrthoDB" id="9777881at2"/>
<dbReference type="UniPathway" id="UPA00074">
    <property type="reaction ID" value="UER00129"/>
</dbReference>
<dbReference type="Proteomes" id="UP000009175">
    <property type="component" value="Chromosome"/>
</dbReference>
<dbReference type="GO" id="GO:0005829">
    <property type="term" value="C:cytosol"/>
    <property type="evidence" value="ECO:0007669"/>
    <property type="project" value="TreeGrafter"/>
</dbReference>
<dbReference type="GO" id="GO:0005524">
    <property type="term" value="F:ATP binding"/>
    <property type="evidence" value="ECO:0007669"/>
    <property type="project" value="UniProtKB-KW"/>
</dbReference>
<dbReference type="GO" id="GO:0004637">
    <property type="term" value="F:phosphoribosylamine-glycine ligase activity"/>
    <property type="evidence" value="ECO:0007669"/>
    <property type="project" value="TreeGrafter"/>
</dbReference>
<dbReference type="GO" id="GO:0004641">
    <property type="term" value="F:phosphoribosylformylglycinamidine cyclo-ligase activity"/>
    <property type="evidence" value="ECO:0007669"/>
    <property type="project" value="UniProtKB-UniRule"/>
</dbReference>
<dbReference type="GO" id="GO:0006189">
    <property type="term" value="P:'de novo' IMP biosynthetic process"/>
    <property type="evidence" value="ECO:0007669"/>
    <property type="project" value="UniProtKB-UniRule"/>
</dbReference>
<dbReference type="GO" id="GO:0046084">
    <property type="term" value="P:adenine biosynthetic process"/>
    <property type="evidence" value="ECO:0007669"/>
    <property type="project" value="TreeGrafter"/>
</dbReference>
<dbReference type="CDD" id="cd02196">
    <property type="entry name" value="PurM"/>
    <property type="match status" value="1"/>
</dbReference>
<dbReference type="FunFam" id="3.30.1330.10:FF:000001">
    <property type="entry name" value="Phosphoribosylformylglycinamidine cyclo-ligase"/>
    <property type="match status" value="1"/>
</dbReference>
<dbReference type="FunFam" id="3.90.650.10:FF:000001">
    <property type="entry name" value="Phosphoribosylformylglycinamidine cyclo-ligase"/>
    <property type="match status" value="1"/>
</dbReference>
<dbReference type="Gene3D" id="3.90.650.10">
    <property type="entry name" value="PurM-like C-terminal domain"/>
    <property type="match status" value="1"/>
</dbReference>
<dbReference type="Gene3D" id="3.30.1330.10">
    <property type="entry name" value="PurM-like, N-terminal domain"/>
    <property type="match status" value="1"/>
</dbReference>
<dbReference type="HAMAP" id="MF_00741">
    <property type="entry name" value="AIRS"/>
    <property type="match status" value="1"/>
</dbReference>
<dbReference type="InterPro" id="IPR010918">
    <property type="entry name" value="PurM-like_C_dom"/>
</dbReference>
<dbReference type="InterPro" id="IPR036676">
    <property type="entry name" value="PurM-like_C_sf"/>
</dbReference>
<dbReference type="InterPro" id="IPR016188">
    <property type="entry name" value="PurM-like_N"/>
</dbReference>
<dbReference type="InterPro" id="IPR036921">
    <property type="entry name" value="PurM-like_N_sf"/>
</dbReference>
<dbReference type="InterPro" id="IPR004733">
    <property type="entry name" value="PurM_cligase"/>
</dbReference>
<dbReference type="NCBIfam" id="TIGR00878">
    <property type="entry name" value="purM"/>
    <property type="match status" value="1"/>
</dbReference>
<dbReference type="PANTHER" id="PTHR10520:SF12">
    <property type="entry name" value="TRIFUNCTIONAL PURINE BIOSYNTHETIC PROTEIN ADENOSINE-3"/>
    <property type="match status" value="1"/>
</dbReference>
<dbReference type="PANTHER" id="PTHR10520">
    <property type="entry name" value="TRIFUNCTIONAL PURINE BIOSYNTHETIC PROTEIN ADENOSINE-3-RELATED"/>
    <property type="match status" value="1"/>
</dbReference>
<dbReference type="Pfam" id="PF00586">
    <property type="entry name" value="AIRS"/>
    <property type="match status" value="1"/>
</dbReference>
<dbReference type="Pfam" id="PF02769">
    <property type="entry name" value="AIRS_C"/>
    <property type="match status" value="1"/>
</dbReference>
<dbReference type="SUPFAM" id="SSF56042">
    <property type="entry name" value="PurM C-terminal domain-like"/>
    <property type="match status" value="1"/>
</dbReference>
<dbReference type="SUPFAM" id="SSF55326">
    <property type="entry name" value="PurM N-terminal domain-like"/>
    <property type="match status" value="1"/>
</dbReference>
<gene>
    <name evidence="1" type="primary">purM</name>
    <name type="ordered locus">Sama_2097</name>
</gene>
<organism>
    <name type="scientific">Shewanella amazonensis (strain ATCC BAA-1098 / SB2B)</name>
    <dbReference type="NCBI Taxonomy" id="326297"/>
    <lineage>
        <taxon>Bacteria</taxon>
        <taxon>Pseudomonadati</taxon>
        <taxon>Pseudomonadota</taxon>
        <taxon>Gammaproteobacteria</taxon>
        <taxon>Alteromonadales</taxon>
        <taxon>Shewanellaceae</taxon>
        <taxon>Shewanella</taxon>
    </lineage>
</organism>
<comment type="catalytic activity">
    <reaction evidence="1">
        <text>2-formamido-N(1)-(5-O-phospho-beta-D-ribosyl)acetamidine + ATP = 5-amino-1-(5-phospho-beta-D-ribosyl)imidazole + ADP + phosphate + H(+)</text>
        <dbReference type="Rhea" id="RHEA:23032"/>
        <dbReference type="ChEBI" id="CHEBI:15378"/>
        <dbReference type="ChEBI" id="CHEBI:30616"/>
        <dbReference type="ChEBI" id="CHEBI:43474"/>
        <dbReference type="ChEBI" id="CHEBI:137981"/>
        <dbReference type="ChEBI" id="CHEBI:147287"/>
        <dbReference type="ChEBI" id="CHEBI:456216"/>
        <dbReference type="EC" id="6.3.3.1"/>
    </reaction>
</comment>
<comment type="pathway">
    <text evidence="1">Purine metabolism; IMP biosynthesis via de novo pathway; 5-amino-1-(5-phospho-D-ribosyl)imidazole from N(2)-formyl-N(1)-(5-phospho-D-ribosyl)glycinamide: step 2/2.</text>
</comment>
<comment type="subcellular location">
    <subcellularLocation>
        <location evidence="1">Cytoplasm</location>
    </subcellularLocation>
</comment>
<comment type="similarity">
    <text evidence="1">Belongs to the AIR synthase family.</text>
</comment>
<sequence>MSTPTPLSYKDAGVDIDAGNALVQNIKSAVKRTRRPEVMGNLGGFGALCELPTKYKHPVLVSGTDGVGTKLRLAIDFKSHDTVGIDLVAMCVNDLIVQGAEPLFFLDYYATGKLDVETATSVVNGIGEGCFQSGCALIGGETAEMPGMYEGEDYDLAGFCVGVVEKADIIDGTKVKAGDALIALASSGPHSNGYSLIRKVLEVSKADPQMDLNGKPLIKHLLEPTKIYVKSLLKLIAESDVHAMAHITGGGFWENIPRVLPDNCKAVVQGDSWQWPVVFDWLQTAGNIETYEMYRTFNCGVGMIVALPADKVDAALELLKAEGENAWHIGHIAARNGDEEQVEIL</sequence>
<protein>
    <recommendedName>
        <fullName evidence="1">Phosphoribosylformylglycinamidine cyclo-ligase</fullName>
        <ecNumber evidence="1">6.3.3.1</ecNumber>
    </recommendedName>
    <alternativeName>
        <fullName evidence="1">AIR synthase</fullName>
    </alternativeName>
    <alternativeName>
        <fullName evidence="1">AIRS</fullName>
    </alternativeName>
    <alternativeName>
        <fullName evidence="1">Phosphoribosyl-aminoimidazole synthetase</fullName>
    </alternativeName>
</protein>
<reference key="1">
    <citation type="submission" date="2006-12" db="EMBL/GenBank/DDBJ databases">
        <title>Complete sequence of Shewanella amazonensis SB2B.</title>
        <authorList>
            <consortium name="US DOE Joint Genome Institute"/>
            <person name="Copeland A."/>
            <person name="Lucas S."/>
            <person name="Lapidus A."/>
            <person name="Barry K."/>
            <person name="Detter J.C."/>
            <person name="Glavina del Rio T."/>
            <person name="Hammon N."/>
            <person name="Israni S."/>
            <person name="Dalin E."/>
            <person name="Tice H."/>
            <person name="Pitluck S."/>
            <person name="Munk A.C."/>
            <person name="Brettin T."/>
            <person name="Bruce D."/>
            <person name="Han C."/>
            <person name="Tapia R."/>
            <person name="Gilna P."/>
            <person name="Schmutz J."/>
            <person name="Larimer F."/>
            <person name="Land M."/>
            <person name="Hauser L."/>
            <person name="Kyrpides N."/>
            <person name="Mikhailova N."/>
            <person name="Fredrickson J."/>
            <person name="Richardson P."/>
        </authorList>
    </citation>
    <scope>NUCLEOTIDE SEQUENCE [LARGE SCALE GENOMIC DNA]</scope>
    <source>
        <strain>ATCC BAA-1098 / SB2B</strain>
    </source>
</reference>
<name>PUR5_SHEAM</name>
<proteinExistence type="inferred from homology"/>
<evidence type="ECO:0000255" key="1">
    <source>
        <dbReference type="HAMAP-Rule" id="MF_00741"/>
    </source>
</evidence>
<keyword id="KW-0067">ATP-binding</keyword>
<keyword id="KW-0963">Cytoplasm</keyword>
<keyword id="KW-0436">Ligase</keyword>
<keyword id="KW-0547">Nucleotide-binding</keyword>
<keyword id="KW-0658">Purine biosynthesis</keyword>
<keyword id="KW-1185">Reference proteome</keyword>
<feature type="chain" id="PRO_1000062163" description="Phosphoribosylformylglycinamidine cyclo-ligase">
    <location>
        <begin position="1"/>
        <end position="345"/>
    </location>
</feature>
<accession>A1S7E6</accession>